<name>EFP_FRATF</name>
<accession>A7N9M0</accession>
<keyword id="KW-0963">Cytoplasm</keyword>
<keyword id="KW-0251">Elongation factor</keyword>
<keyword id="KW-0379">Hydroxylation</keyword>
<keyword id="KW-0648">Protein biosynthesis</keyword>
<protein>
    <recommendedName>
        <fullName evidence="1">Elongation factor P</fullName>
        <shortName evidence="1">EF-P</shortName>
    </recommendedName>
</protein>
<gene>
    <name evidence="1" type="primary">efp</name>
    <name type="ordered locus">FTA_0196</name>
</gene>
<evidence type="ECO:0000255" key="1">
    <source>
        <dbReference type="HAMAP-Rule" id="MF_00141"/>
    </source>
</evidence>
<comment type="function">
    <text evidence="1">Involved in peptide bond synthesis. Alleviates ribosome stalling that occurs when 3 or more consecutive Pro residues or the sequence PPG is present in a protein, possibly by augmenting the peptidyl transferase activity of the ribosome. Modification of Lys-34 is required for alleviation.</text>
</comment>
<comment type="pathway">
    <text evidence="1">Protein biosynthesis; polypeptide chain elongation.</text>
</comment>
<comment type="subcellular location">
    <subcellularLocation>
        <location evidence="1">Cytoplasm</location>
    </subcellularLocation>
</comment>
<comment type="PTM">
    <text evidence="1">May be beta-lysylated on the epsilon-amino group of Lys-34 by the combined action of EpmA and EpmB, and then hydroxylated on the C5 position of the same residue by EpmC (if this protein is present). Lysylation is critical for the stimulatory effect of EF-P on peptide-bond formation. The lysylation moiety may extend toward the peptidyltransferase center and stabilize the terminal 3-CCA end of the tRNA. Hydroxylation of the C5 position on Lys-34 may allow additional potential stabilizing hydrogen-bond interactions with the P-tRNA.</text>
</comment>
<comment type="similarity">
    <text evidence="1">Belongs to the elongation factor P family.</text>
</comment>
<proteinExistence type="inferred from homology"/>
<reference key="1">
    <citation type="journal article" date="2009" name="PLoS ONE">
        <title>Complete genome sequence of Francisella tularensis subspecies holarctica FTNF002-00.</title>
        <authorList>
            <person name="Barabote R.D."/>
            <person name="Xie G."/>
            <person name="Brettin T.S."/>
            <person name="Hinrichs S.H."/>
            <person name="Fey P.D."/>
            <person name="Jay J.J."/>
            <person name="Engle J.L."/>
            <person name="Godbole S.D."/>
            <person name="Noronha J.M."/>
            <person name="Scheuermann R.H."/>
            <person name="Zhou L.W."/>
            <person name="Lion C."/>
            <person name="Dempsey M.P."/>
        </authorList>
    </citation>
    <scope>NUCLEOTIDE SEQUENCE [LARGE SCALE GENOMIC DNA]</scope>
    <source>
        <strain>FTNF002-00 / FTA</strain>
    </source>
</reference>
<dbReference type="EMBL" id="CP000803">
    <property type="protein sequence ID" value="ABU60673.1"/>
    <property type="molecule type" value="Genomic_DNA"/>
</dbReference>
<dbReference type="RefSeq" id="WP_003014194.1">
    <property type="nucleotide sequence ID" value="NC_009749.1"/>
</dbReference>
<dbReference type="SMR" id="A7N9M0"/>
<dbReference type="KEGG" id="fta:FTA_0196"/>
<dbReference type="HOGENOM" id="CLU_074944_0_0_6"/>
<dbReference type="UniPathway" id="UPA00345"/>
<dbReference type="GO" id="GO:0005737">
    <property type="term" value="C:cytoplasm"/>
    <property type="evidence" value="ECO:0007669"/>
    <property type="project" value="UniProtKB-SubCell"/>
</dbReference>
<dbReference type="GO" id="GO:0003746">
    <property type="term" value="F:translation elongation factor activity"/>
    <property type="evidence" value="ECO:0007669"/>
    <property type="project" value="UniProtKB-UniRule"/>
</dbReference>
<dbReference type="GO" id="GO:0043043">
    <property type="term" value="P:peptide biosynthetic process"/>
    <property type="evidence" value="ECO:0007669"/>
    <property type="project" value="InterPro"/>
</dbReference>
<dbReference type="CDD" id="cd04470">
    <property type="entry name" value="S1_EF-P_repeat_1"/>
    <property type="match status" value="1"/>
</dbReference>
<dbReference type="CDD" id="cd05794">
    <property type="entry name" value="S1_EF-P_repeat_2"/>
    <property type="match status" value="1"/>
</dbReference>
<dbReference type="FunFam" id="2.30.30.30:FF:000003">
    <property type="entry name" value="Elongation factor P"/>
    <property type="match status" value="1"/>
</dbReference>
<dbReference type="FunFam" id="2.40.50.140:FF:000004">
    <property type="entry name" value="Elongation factor P"/>
    <property type="match status" value="1"/>
</dbReference>
<dbReference type="FunFam" id="2.40.50.140:FF:000009">
    <property type="entry name" value="Elongation factor P"/>
    <property type="match status" value="1"/>
</dbReference>
<dbReference type="Gene3D" id="2.30.30.30">
    <property type="match status" value="1"/>
</dbReference>
<dbReference type="Gene3D" id="2.40.50.140">
    <property type="entry name" value="Nucleic acid-binding proteins"/>
    <property type="match status" value="2"/>
</dbReference>
<dbReference type="HAMAP" id="MF_00141">
    <property type="entry name" value="EF_P"/>
    <property type="match status" value="1"/>
</dbReference>
<dbReference type="InterPro" id="IPR015365">
    <property type="entry name" value="Elong-fact-P_C"/>
</dbReference>
<dbReference type="InterPro" id="IPR012340">
    <property type="entry name" value="NA-bd_OB-fold"/>
</dbReference>
<dbReference type="InterPro" id="IPR014722">
    <property type="entry name" value="Rib_uL2_dom2"/>
</dbReference>
<dbReference type="InterPro" id="IPR020599">
    <property type="entry name" value="Transl_elong_fac_P/YeiP"/>
</dbReference>
<dbReference type="InterPro" id="IPR013185">
    <property type="entry name" value="Transl_elong_KOW-like"/>
</dbReference>
<dbReference type="InterPro" id="IPR001059">
    <property type="entry name" value="Transl_elong_P/YeiP_cen"/>
</dbReference>
<dbReference type="InterPro" id="IPR013852">
    <property type="entry name" value="Transl_elong_P/YeiP_CS"/>
</dbReference>
<dbReference type="InterPro" id="IPR011768">
    <property type="entry name" value="Transl_elongation_fac_P"/>
</dbReference>
<dbReference type="InterPro" id="IPR008991">
    <property type="entry name" value="Translation_prot_SH3-like_sf"/>
</dbReference>
<dbReference type="NCBIfam" id="TIGR00038">
    <property type="entry name" value="efp"/>
    <property type="match status" value="1"/>
</dbReference>
<dbReference type="NCBIfam" id="NF001810">
    <property type="entry name" value="PRK00529.1"/>
    <property type="match status" value="1"/>
</dbReference>
<dbReference type="PANTHER" id="PTHR30053">
    <property type="entry name" value="ELONGATION FACTOR P"/>
    <property type="match status" value="1"/>
</dbReference>
<dbReference type="PANTHER" id="PTHR30053:SF12">
    <property type="entry name" value="ELONGATION FACTOR P (EF-P) FAMILY PROTEIN"/>
    <property type="match status" value="1"/>
</dbReference>
<dbReference type="Pfam" id="PF01132">
    <property type="entry name" value="EFP"/>
    <property type="match status" value="1"/>
</dbReference>
<dbReference type="Pfam" id="PF08207">
    <property type="entry name" value="EFP_N"/>
    <property type="match status" value="1"/>
</dbReference>
<dbReference type="Pfam" id="PF09285">
    <property type="entry name" value="Elong-fact-P_C"/>
    <property type="match status" value="1"/>
</dbReference>
<dbReference type="PIRSF" id="PIRSF005901">
    <property type="entry name" value="EF-P"/>
    <property type="match status" value="1"/>
</dbReference>
<dbReference type="SMART" id="SM01185">
    <property type="entry name" value="EFP"/>
    <property type="match status" value="1"/>
</dbReference>
<dbReference type="SMART" id="SM00841">
    <property type="entry name" value="Elong-fact-P_C"/>
    <property type="match status" value="1"/>
</dbReference>
<dbReference type="SUPFAM" id="SSF50249">
    <property type="entry name" value="Nucleic acid-binding proteins"/>
    <property type="match status" value="2"/>
</dbReference>
<dbReference type="SUPFAM" id="SSF50104">
    <property type="entry name" value="Translation proteins SH3-like domain"/>
    <property type="match status" value="1"/>
</dbReference>
<dbReference type="PROSITE" id="PS01275">
    <property type="entry name" value="EFP"/>
    <property type="match status" value="1"/>
</dbReference>
<sequence>MASYSTNEFKGGLKVLIDGNPMVIVENEFVKPGKGQAFNRVKLKNLLNDRVVEKTFKSGESVEAADVEELTTVYSYFDGDSYVFMHPETFEQYMVSEEALGETKKWLKDQDEYQVILFNGQPISIIAANFVNLEIIETDPGLKGDTAGTGGKPATLSTGAVVRVPLFVQTGEIIKVDTRTSTYVSRVKD</sequence>
<organism>
    <name type="scientific">Francisella tularensis subsp. holarctica (strain FTNF002-00 / FTA)</name>
    <dbReference type="NCBI Taxonomy" id="458234"/>
    <lineage>
        <taxon>Bacteria</taxon>
        <taxon>Pseudomonadati</taxon>
        <taxon>Pseudomonadota</taxon>
        <taxon>Gammaproteobacteria</taxon>
        <taxon>Thiotrichales</taxon>
        <taxon>Francisellaceae</taxon>
        <taxon>Francisella</taxon>
    </lineage>
</organism>
<feature type="chain" id="PRO_1000010746" description="Elongation factor P">
    <location>
        <begin position="1"/>
        <end position="189"/>
    </location>
</feature>
<feature type="modified residue" description="N6-(3,6-diaminohexanoyl)-5-hydroxylysine" evidence="1">
    <location>
        <position position="34"/>
    </location>
</feature>